<dbReference type="EMBL" id="AB060688">
    <property type="protein sequence ID" value="BAB72100.1"/>
    <property type="molecule type" value="mRNA"/>
</dbReference>
<dbReference type="EMBL" id="AK304348">
    <property type="protein sequence ID" value="BAG65192.1"/>
    <property type="molecule type" value="mRNA"/>
</dbReference>
<dbReference type="EMBL" id="AK312550">
    <property type="protein sequence ID" value="BAG35447.1"/>
    <property type="molecule type" value="mRNA"/>
</dbReference>
<dbReference type="EMBL" id="AL357140">
    <property type="status" value="NOT_ANNOTATED_CDS"/>
    <property type="molecule type" value="Genomic_DNA"/>
</dbReference>
<dbReference type="EMBL" id="CH471130">
    <property type="protein sequence ID" value="EAW71633.1"/>
    <property type="molecule type" value="Genomic_DNA"/>
</dbReference>
<dbReference type="EMBL" id="BC007240">
    <property type="protein sequence ID" value="AAH07240.2"/>
    <property type="molecule type" value="mRNA"/>
</dbReference>
<dbReference type="EMBL" id="BC063443">
    <property type="protein sequence ID" value="AAH63443.1"/>
    <property type="molecule type" value="mRNA"/>
</dbReference>
<dbReference type="CCDS" id="CCDS107.1">
    <molecule id="Q8WZA0-1"/>
</dbReference>
<dbReference type="RefSeq" id="NP_001303902.1">
    <molecule id="Q8WZA0-1"/>
    <property type="nucleotide sequence ID" value="NM_001316973.2"/>
</dbReference>
<dbReference type="RefSeq" id="NP_001303903.1">
    <molecule id="Q8WZA0-2"/>
    <property type="nucleotide sequence ID" value="NM_001316974.2"/>
</dbReference>
<dbReference type="RefSeq" id="NP_115744.2">
    <molecule id="Q8WZA0-1"/>
    <property type="nucleotide sequence ID" value="NM_032368.4"/>
</dbReference>
<dbReference type="SMR" id="Q8WZA0"/>
<dbReference type="BioGRID" id="124052">
    <property type="interactions" value="26"/>
</dbReference>
<dbReference type="FunCoup" id="Q8WZA0">
    <property type="interactions" value="1919"/>
</dbReference>
<dbReference type="IntAct" id="Q8WZA0">
    <property type="interactions" value="19"/>
</dbReference>
<dbReference type="STRING" id="9606.ENSP00000366430"/>
<dbReference type="ChEMBL" id="CHEMBL4296296"/>
<dbReference type="GlyGen" id="Q8WZA0">
    <property type="glycosylation" value="1 site, 1 O-linked glycan (1 site)"/>
</dbReference>
<dbReference type="iPTMnet" id="Q8WZA0"/>
<dbReference type="PhosphoSitePlus" id="Q8WZA0"/>
<dbReference type="BioMuta" id="LZIC"/>
<dbReference type="DMDM" id="74751644"/>
<dbReference type="jPOST" id="Q8WZA0"/>
<dbReference type="MassIVE" id="Q8WZA0"/>
<dbReference type="PaxDb" id="9606-ENSP00000366430"/>
<dbReference type="PeptideAtlas" id="Q8WZA0"/>
<dbReference type="ProteomicsDB" id="5835"/>
<dbReference type="ProteomicsDB" id="75241">
    <molecule id="Q8WZA0-1"/>
</dbReference>
<dbReference type="Pumba" id="Q8WZA0"/>
<dbReference type="TopDownProteomics" id="Q8WZA0-1">
    <molecule id="Q8WZA0-1"/>
</dbReference>
<dbReference type="Antibodypedia" id="27776">
    <property type="antibodies" value="351 antibodies from 21 providers"/>
</dbReference>
<dbReference type="DNASU" id="84328"/>
<dbReference type="Ensembl" id="ENST00000377213.1">
    <molecule id="Q8WZA0-1"/>
    <property type="protein sequence ID" value="ENSP00000366418.1"/>
    <property type="gene ID" value="ENSG00000162441.12"/>
</dbReference>
<dbReference type="Ensembl" id="ENST00000377223.6">
    <molecule id="Q8WZA0-1"/>
    <property type="protein sequence ID" value="ENSP00000366430.1"/>
    <property type="gene ID" value="ENSG00000162441.12"/>
</dbReference>
<dbReference type="Ensembl" id="ENST00000400903.6">
    <molecule id="Q8WZA0-1"/>
    <property type="protein sequence ID" value="ENSP00000383695.2"/>
    <property type="gene ID" value="ENSG00000162441.12"/>
</dbReference>
<dbReference type="GeneID" id="84328"/>
<dbReference type="KEGG" id="hsa:84328"/>
<dbReference type="MANE-Select" id="ENST00000377223.6">
    <property type="protein sequence ID" value="ENSP00000366430.1"/>
    <property type="RefSeq nucleotide sequence ID" value="NM_032368.5"/>
    <property type="RefSeq protein sequence ID" value="NP_115744.2"/>
</dbReference>
<dbReference type="UCSC" id="uc001aqm.4">
    <molecule id="Q8WZA0-1"/>
    <property type="organism name" value="human"/>
</dbReference>
<dbReference type="AGR" id="HGNC:17497"/>
<dbReference type="CTD" id="84328"/>
<dbReference type="DisGeNET" id="84328"/>
<dbReference type="GeneCards" id="LZIC"/>
<dbReference type="HGNC" id="HGNC:17497">
    <property type="gene designation" value="LZIC"/>
</dbReference>
<dbReference type="HPA" id="ENSG00000162441">
    <property type="expression patterns" value="Low tissue specificity"/>
</dbReference>
<dbReference type="MIM" id="610458">
    <property type="type" value="gene"/>
</dbReference>
<dbReference type="neXtProt" id="NX_Q8WZA0"/>
<dbReference type="OpenTargets" id="ENSG00000162441"/>
<dbReference type="PharmGKB" id="PA30504"/>
<dbReference type="VEuPathDB" id="HostDB:ENSG00000162441"/>
<dbReference type="eggNOG" id="ENOG502QPUB">
    <property type="taxonomic scope" value="Eukaryota"/>
</dbReference>
<dbReference type="GeneTree" id="ENSGT00940000159001"/>
<dbReference type="HOGENOM" id="CLU_091171_0_0_1"/>
<dbReference type="InParanoid" id="Q8WZA0"/>
<dbReference type="OMA" id="TKMMAGN"/>
<dbReference type="OrthoDB" id="10262856at2759"/>
<dbReference type="PAN-GO" id="Q8WZA0">
    <property type="GO annotations" value="0 GO annotations based on evolutionary models"/>
</dbReference>
<dbReference type="PhylomeDB" id="Q8WZA0"/>
<dbReference type="TreeFam" id="TF314533"/>
<dbReference type="PathwayCommons" id="Q8WZA0"/>
<dbReference type="SignaLink" id="Q8WZA0"/>
<dbReference type="BioGRID-ORCS" id="84328">
    <property type="hits" value="18 hits in 1158 CRISPR screens"/>
</dbReference>
<dbReference type="ChiTaRS" id="LZIC">
    <property type="organism name" value="human"/>
</dbReference>
<dbReference type="GenomeRNAi" id="84328"/>
<dbReference type="Pharos" id="Q8WZA0">
    <property type="development level" value="Tdark"/>
</dbReference>
<dbReference type="PRO" id="PR:Q8WZA0"/>
<dbReference type="Proteomes" id="UP000005640">
    <property type="component" value="Chromosome 1"/>
</dbReference>
<dbReference type="RNAct" id="Q8WZA0">
    <property type="molecule type" value="protein"/>
</dbReference>
<dbReference type="Bgee" id="ENSG00000162441">
    <property type="expression patterns" value="Expressed in left testis and 188 other cell types or tissues"/>
</dbReference>
<dbReference type="ExpressionAtlas" id="Q8WZA0">
    <property type="expression patterns" value="baseline and differential"/>
</dbReference>
<dbReference type="GO" id="GO:0008013">
    <property type="term" value="F:beta-catenin binding"/>
    <property type="evidence" value="ECO:0007669"/>
    <property type="project" value="InterPro"/>
</dbReference>
<dbReference type="GO" id="GO:0010212">
    <property type="term" value="P:response to ionizing radiation"/>
    <property type="evidence" value="ECO:0007669"/>
    <property type="project" value="Ensembl"/>
</dbReference>
<dbReference type="FunFam" id="1.10.10.490:FF:000002">
    <property type="entry name" value="protein LZIC isoform X1"/>
    <property type="match status" value="1"/>
</dbReference>
<dbReference type="Gene3D" id="1.10.10.490">
    <property type="entry name" value="Beta-catenin-interacting ICAT"/>
    <property type="match status" value="1"/>
</dbReference>
<dbReference type="InterPro" id="IPR009428">
    <property type="entry name" value="ICAT_dom"/>
</dbReference>
<dbReference type="InterPro" id="IPR036911">
    <property type="entry name" value="ICAT_sf"/>
</dbReference>
<dbReference type="PANTHER" id="PTHR47142">
    <property type="entry name" value="BETA-CATENIN-INTERACTING PROTEIN 1"/>
    <property type="match status" value="1"/>
</dbReference>
<dbReference type="PANTHER" id="PTHR47142:SF1">
    <property type="entry name" value="BETA-CATENIN-INTERACTING PROTEIN 1"/>
    <property type="match status" value="1"/>
</dbReference>
<dbReference type="Pfam" id="PF06384">
    <property type="entry name" value="ICAT"/>
    <property type="match status" value="1"/>
</dbReference>
<dbReference type="SUPFAM" id="SSF81730">
    <property type="entry name" value="beta-catenin-interacting protein ICAT"/>
    <property type="match status" value="1"/>
</dbReference>
<organism>
    <name type="scientific">Homo sapiens</name>
    <name type="common">Human</name>
    <dbReference type="NCBI Taxonomy" id="9606"/>
    <lineage>
        <taxon>Eukaryota</taxon>
        <taxon>Metazoa</taxon>
        <taxon>Chordata</taxon>
        <taxon>Craniata</taxon>
        <taxon>Vertebrata</taxon>
        <taxon>Euteleostomi</taxon>
        <taxon>Mammalia</taxon>
        <taxon>Eutheria</taxon>
        <taxon>Euarchontoglires</taxon>
        <taxon>Primates</taxon>
        <taxon>Haplorrhini</taxon>
        <taxon>Catarrhini</taxon>
        <taxon>Hominidae</taxon>
        <taxon>Homo</taxon>
    </lineage>
</organism>
<proteinExistence type="evidence at protein level"/>
<keyword id="KW-0025">Alternative splicing</keyword>
<keyword id="KW-0175">Coiled coil</keyword>
<keyword id="KW-1267">Proteomics identification</keyword>
<keyword id="KW-1185">Reference proteome</keyword>
<protein>
    <recommendedName>
        <fullName>Protein LZIC</fullName>
    </recommendedName>
    <alternativeName>
        <fullName>Leucine zipper and CTNNBIP1 domain-containing protein</fullName>
    </alternativeName>
    <alternativeName>
        <fullName>Leucine zipper and ICAT homologous domain-containing protein</fullName>
    </alternativeName>
</protein>
<comment type="subunit">
    <text evidence="1">Does not interact with CTNNB1.</text>
</comment>
<comment type="interaction">
    <interactant intactId="EBI-5774346">
        <id>Q8WZA0</id>
    </interactant>
    <interactant intactId="EBI-1055254">
        <id>Q8WXH2</id>
        <label>JPH3</label>
    </interactant>
    <organismsDiffer>false</organismsDiffer>
    <experiments>3</experiments>
</comment>
<comment type="interaction">
    <interactant intactId="EBI-5774346">
        <id>Q8WZA0</id>
    </interactant>
    <interactant intactId="EBI-355164">
        <id>P55072</id>
        <label>VCP</label>
    </interactant>
    <organismsDiffer>false</organismsDiffer>
    <experiments>3</experiments>
</comment>
<comment type="interaction">
    <interactant intactId="EBI-5774346">
        <id>Q8WZA0</id>
    </interactant>
    <interactant intactId="EBI-373363">
        <id>Q96NG5</id>
        <label>ZNF558</label>
    </interactant>
    <organismsDiffer>false</organismsDiffer>
    <experiments>3</experiments>
</comment>
<comment type="alternative products">
    <event type="alternative splicing"/>
    <isoform>
        <id>Q8WZA0-1</id>
        <name>1</name>
        <sequence type="displayed"/>
    </isoform>
    <isoform>
        <id>Q8WZA0-2</id>
        <name>2</name>
        <sequence type="described" ref="VSP_056083"/>
    </isoform>
</comment>
<comment type="tissue specificity">
    <text evidence="3">Ubiquitously expressed, with highest levels in kidney. Up-regulated in several cases of gastric cancers.</text>
</comment>
<comment type="similarity">
    <text evidence="5">Belongs to the CTNNBIP1 family.</text>
</comment>
<accession>Q8WZA0</accession>
<accession>B2R6F0</accession>
<accession>B4E2N0</accession>
<accession>Q96IU1</accession>
<evidence type="ECO:0000250" key="1"/>
<evidence type="ECO:0000255" key="2"/>
<evidence type="ECO:0000269" key="3">
    <source>
    </source>
</evidence>
<evidence type="ECO:0000303" key="4">
    <source>
    </source>
</evidence>
<evidence type="ECO:0000305" key="5"/>
<sequence>MASRGKTETSKLKQNLEEQLDRLMQQLQDLEECREELDTDEYEETKKETLEQLSEFNDSLKKIMSGNMTLVDELSGMQLAIQAAISQAFKTPEVIRLFAKKQPGQLRTRLAEMDRDLMVGKLERDLYTQQKVEILTALRKLGEKLTADDEAFLSANAGAILSQFEKVSTDLGSGDKILALASFEVEKTKK</sequence>
<reference key="1">
    <citation type="journal article" date="2001" name="Int. J. Mol. Med.">
        <title>Molecular cloning and characterization of LZIC, a novel gene encoding ICAT homologous protein with leucine zipper domain.</title>
        <authorList>
            <person name="Katoh M."/>
        </authorList>
    </citation>
    <scope>NUCLEOTIDE SEQUENCE [MRNA] (ISOFORM 1)</scope>
    <scope>TISSUE SPECIFICITY</scope>
    <source>
        <tissue>Stomach</tissue>
    </source>
</reference>
<reference key="2">
    <citation type="journal article" date="2004" name="Nat. Genet.">
        <title>Complete sequencing and characterization of 21,243 full-length human cDNAs.</title>
        <authorList>
            <person name="Ota T."/>
            <person name="Suzuki Y."/>
            <person name="Nishikawa T."/>
            <person name="Otsuki T."/>
            <person name="Sugiyama T."/>
            <person name="Irie R."/>
            <person name="Wakamatsu A."/>
            <person name="Hayashi K."/>
            <person name="Sato H."/>
            <person name="Nagai K."/>
            <person name="Kimura K."/>
            <person name="Makita H."/>
            <person name="Sekine M."/>
            <person name="Obayashi M."/>
            <person name="Nishi T."/>
            <person name="Shibahara T."/>
            <person name="Tanaka T."/>
            <person name="Ishii S."/>
            <person name="Yamamoto J."/>
            <person name="Saito K."/>
            <person name="Kawai Y."/>
            <person name="Isono Y."/>
            <person name="Nakamura Y."/>
            <person name="Nagahari K."/>
            <person name="Murakami K."/>
            <person name="Yasuda T."/>
            <person name="Iwayanagi T."/>
            <person name="Wagatsuma M."/>
            <person name="Shiratori A."/>
            <person name="Sudo H."/>
            <person name="Hosoiri T."/>
            <person name="Kaku Y."/>
            <person name="Kodaira H."/>
            <person name="Kondo H."/>
            <person name="Sugawara M."/>
            <person name="Takahashi M."/>
            <person name="Kanda K."/>
            <person name="Yokoi T."/>
            <person name="Furuya T."/>
            <person name="Kikkawa E."/>
            <person name="Omura Y."/>
            <person name="Abe K."/>
            <person name="Kamihara K."/>
            <person name="Katsuta N."/>
            <person name="Sato K."/>
            <person name="Tanikawa M."/>
            <person name="Yamazaki M."/>
            <person name="Ninomiya K."/>
            <person name="Ishibashi T."/>
            <person name="Yamashita H."/>
            <person name="Murakawa K."/>
            <person name="Fujimori K."/>
            <person name="Tanai H."/>
            <person name="Kimata M."/>
            <person name="Watanabe M."/>
            <person name="Hiraoka S."/>
            <person name="Chiba Y."/>
            <person name="Ishida S."/>
            <person name="Ono Y."/>
            <person name="Takiguchi S."/>
            <person name="Watanabe S."/>
            <person name="Yosida M."/>
            <person name="Hotuta T."/>
            <person name="Kusano J."/>
            <person name="Kanehori K."/>
            <person name="Takahashi-Fujii A."/>
            <person name="Hara H."/>
            <person name="Tanase T.-O."/>
            <person name="Nomura Y."/>
            <person name="Togiya S."/>
            <person name="Komai F."/>
            <person name="Hara R."/>
            <person name="Takeuchi K."/>
            <person name="Arita M."/>
            <person name="Imose N."/>
            <person name="Musashino K."/>
            <person name="Yuuki H."/>
            <person name="Oshima A."/>
            <person name="Sasaki N."/>
            <person name="Aotsuka S."/>
            <person name="Yoshikawa Y."/>
            <person name="Matsunawa H."/>
            <person name="Ichihara T."/>
            <person name="Shiohata N."/>
            <person name="Sano S."/>
            <person name="Moriya S."/>
            <person name="Momiyama H."/>
            <person name="Satoh N."/>
            <person name="Takami S."/>
            <person name="Terashima Y."/>
            <person name="Suzuki O."/>
            <person name="Nakagawa S."/>
            <person name="Senoh A."/>
            <person name="Mizoguchi H."/>
            <person name="Goto Y."/>
            <person name="Shimizu F."/>
            <person name="Wakebe H."/>
            <person name="Hishigaki H."/>
            <person name="Watanabe T."/>
            <person name="Sugiyama A."/>
            <person name="Takemoto M."/>
            <person name="Kawakami B."/>
            <person name="Yamazaki M."/>
            <person name="Watanabe K."/>
            <person name="Kumagai A."/>
            <person name="Itakura S."/>
            <person name="Fukuzumi Y."/>
            <person name="Fujimori Y."/>
            <person name="Komiyama M."/>
            <person name="Tashiro H."/>
            <person name="Tanigami A."/>
            <person name="Fujiwara T."/>
            <person name="Ono T."/>
            <person name="Yamada K."/>
            <person name="Fujii Y."/>
            <person name="Ozaki K."/>
            <person name="Hirao M."/>
            <person name="Ohmori Y."/>
            <person name="Kawabata A."/>
            <person name="Hikiji T."/>
            <person name="Kobatake N."/>
            <person name="Inagaki H."/>
            <person name="Ikema Y."/>
            <person name="Okamoto S."/>
            <person name="Okitani R."/>
            <person name="Kawakami T."/>
            <person name="Noguchi S."/>
            <person name="Itoh T."/>
            <person name="Shigeta K."/>
            <person name="Senba T."/>
            <person name="Matsumura K."/>
            <person name="Nakajima Y."/>
            <person name="Mizuno T."/>
            <person name="Morinaga M."/>
            <person name="Sasaki M."/>
            <person name="Togashi T."/>
            <person name="Oyama M."/>
            <person name="Hata H."/>
            <person name="Watanabe M."/>
            <person name="Komatsu T."/>
            <person name="Mizushima-Sugano J."/>
            <person name="Satoh T."/>
            <person name="Shirai Y."/>
            <person name="Takahashi Y."/>
            <person name="Nakagawa K."/>
            <person name="Okumura K."/>
            <person name="Nagase T."/>
            <person name="Nomura N."/>
            <person name="Kikuchi H."/>
            <person name="Masuho Y."/>
            <person name="Yamashita R."/>
            <person name="Nakai K."/>
            <person name="Yada T."/>
            <person name="Nakamura Y."/>
            <person name="Ohara O."/>
            <person name="Isogai T."/>
            <person name="Sugano S."/>
        </authorList>
    </citation>
    <scope>NUCLEOTIDE SEQUENCE [LARGE SCALE MRNA] (ISOFORMS 1 AND 2)</scope>
    <source>
        <tissue>Tongue</tissue>
        <tissue>Trachea</tissue>
    </source>
</reference>
<reference key="3">
    <citation type="journal article" date="2006" name="Nature">
        <title>The DNA sequence and biological annotation of human chromosome 1.</title>
        <authorList>
            <person name="Gregory S.G."/>
            <person name="Barlow K.F."/>
            <person name="McLay K.E."/>
            <person name="Kaul R."/>
            <person name="Swarbreck D."/>
            <person name="Dunham A."/>
            <person name="Scott C.E."/>
            <person name="Howe K.L."/>
            <person name="Woodfine K."/>
            <person name="Spencer C.C.A."/>
            <person name="Jones M.C."/>
            <person name="Gillson C."/>
            <person name="Searle S."/>
            <person name="Zhou Y."/>
            <person name="Kokocinski F."/>
            <person name="McDonald L."/>
            <person name="Evans R."/>
            <person name="Phillips K."/>
            <person name="Atkinson A."/>
            <person name="Cooper R."/>
            <person name="Jones C."/>
            <person name="Hall R.E."/>
            <person name="Andrews T.D."/>
            <person name="Lloyd C."/>
            <person name="Ainscough R."/>
            <person name="Almeida J.P."/>
            <person name="Ambrose K.D."/>
            <person name="Anderson F."/>
            <person name="Andrew R.W."/>
            <person name="Ashwell R.I.S."/>
            <person name="Aubin K."/>
            <person name="Babbage A.K."/>
            <person name="Bagguley C.L."/>
            <person name="Bailey J."/>
            <person name="Beasley H."/>
            <person name="Bethel G."/>
            <person name="Bird C.P."/>
            <person name="Bray-Allen S."/>
            <person name="Brown J.Y."/>
            <person name="Brown A.J."/>
            <person name="Buckley D."/>
            <person name="Burton J."/>
            <person name="Bye J."/>
            <person name="Carder C."/>
            <person name="Chapman J.C."/>
            <person name="Clark S.Y."/>
            <person name="Clarke G."/>
            <person name="Clee C."/>
            <person name="Cobley V."/>
            <person name="Collier R.E."/>
            <person name="Corby N."/>
            <person name="Coville G.J."/>
            <person name="Davies J."/>
            <person name="Deadman R."/>
            <person name="Dunn M."/>
            <person name="Earthrowl M."/>
            <person name="Ellington A.G."/>
            <person name="Errington H."/>
            <person name="Frankish A."/>
            <person name="Frankland J."/>
            <person name="French L."/>
            <person name="Garner P."/>
            <person name="Garnett J."/>
            <person name="Gay L."/>
            <person name="Ghori M.R.J."/>
            <person name="Gibson R."/>
            <person name="Gilby L.M."/>
            <person name="Gillett W."/>
            <person name="Glithero R.J."/>
            <person name="Grafham D.V."/>
            <person name="Griffiths C."/>
            <person name="Griffiths-Jones S."/>
            <person name="Grocock R."/>
            <person name="Hammond S."/>
            <person name="Harrison E.S.I."/>
            <person name="Hart E."/>
            <person name="Haugen E."/>
            <person name="Heath P.D."/>
            <person name="Holmes S."/>
            <person name="Holt K."/>
            <person name="Howden P.J."/>
            <person name="Hunt A.R."/>
            <person name="Hunt S.E."/>
            <person name="Hunter G."/>
            <person name="Isherwood J."/>
            <person name="James R."/>
            <person name="Johnson C."/>
            <person name="Johnson D."/>
            <person name="Joy A."/>
            <person name="Kay M."/>
            <person name="Kershaw J.K."/>
            <person name="Kibukawa M."/>
            <person name="Kimberley A.M."/>
            <person name="King A."/>
            <person name="Knights A.J."/>
            <person name="Lad H."/>
            <person name="Laird G."/>
            <person name="Lawlor S."/>
            <person name="Leongamornlert D.A."/>
            <person name="Lloyd D.M."/>
            <person name="Loveland J."/>
            <person name="Lovell J."/>
            <person name="Lush M.J."/>
            <person name="Lyne R."/>
            <person name="Martin S."/>
            <person name="Mashreghi-Mohammadi M."/>
            <person name="Matthews L."/>
            <person name="Matthews N.S.W."/>
            <person name="McLaren S."/>
            <person name="Milne S."/>
            <person name="Mistry S."/>
            <person name="Moore M.J.F."/>
            <person name="Nickerson T."/>
            <person name="O'Dell C.N."/>
            <person name="Oliver K."/>
            <person name="Palmeiri A."/>
            <person name="Palmer S.A."/>
            <person name="Parker A."/>
            <person name="Patel D."/>
            <person name="Pearce A.V."/>
            <person name="Peck A.I."/>
            <person name="Pelan S."/>
            <person name="Phelps K."/>
            <person name="Phillimore B.J."/>
            <person name="Plumb R."/>
            <person name="Rajan J."/>
            <person name="Raymond C."/>
            <person name="Rouse G."/>
            <person name="Saenphimmachak C."/>
            <person name="Sehra H.K."/>
            <person name="Sheridan E."/>
            <person name="Shownkeen R."/>
            <person name="Sims S."/>
            <person name="Skuce C.D."/>
            <person name="Smith M."/>
            <person name="Steward C."/>
            <person name="Subramanian S."/>
            <person name="Sycamore N."/>
            <person name="Tracey A."/>
            <person name="Tromans A."/>
            <person name="Van Helmond Z."/>
            <person name="Wall M."/>
            <person name="Wallis J.M."/>
            <person name="White S."/>
            <person name="Whitehead S.L."/>
            <person name="Wilkinson J.E."/>
            <person name="Willey D.L."/>
            <person name="Williams H."/>
            <person name="Wilming L."/>
            <person name="Wray P.W."/>
            <person name="Wu Z."/>
            <person name="Coulson A."/>
            <person name="Vaudin M."/>
            <person name="Sulston J.E."/>
            <person name="Durbin R.M."/>
            <person name="Hubbard T."/>
            <person name="Wooster R."/>
            <person name="Dunham I."/>
            <person name="Carter N.P."/>
            <person name="McVean G."/>
            <person name="Ross M.T."/>
            <person name="Harrow J."/>
            <person name="Olson M.V."/>
            <person name="Beck S."/>
            <person name="Rogers J."/>
            <person name="Bentley D.R."/>
        </authorList>
    </citation>
    <scope>NUCLEOTIDE SEQUENCE [LARGE SCALE GENOMIC DNA]</scope>
</reference>
<reference key="4">
    <citation type="submission" date="2005-07" db="EMBL/GenBank/DDBJ databases">
        <authorList>
            <person name="Mural R.J."/>
            <person name="Istrail S."/>
            <person name="Sutton G.G."/>
            <person name="Florea L."/>
            <person name="Halpern A.L."/>
            <person name="Mobarry C.M."/>
            <person name="Lippert R."/>
            <person name="Walenz B."/>
            <person name="Shatkay H."/>
            <person name="Dew I."/>
            <person name="Miller J.R."/>
            <person name="Flanigan M.J."/>
            <person name="Edwards N.J."/>
            <person name="Bolanos R."/>
            <person name="Fasulo D."/>
            <person name="Halldorsson B.V."/>
            <person name="Hannenhalli S."/>
            <person name="Turner R."/>
            <person name="Yooseph S."/>
            <person name="Lu F."/>
            <person name="Nusskern D.R."/>
            <person name="Shue B.C."/>
            <person name="Zheng X.H."/>
            <person name="Zhong F."/>
            <person name="Delcher A.L."/>
            <person name="Huson D.H."/>
            <person name="Kravitz S.A."/>
            <person name="Mouchard L."/>
            <person name="Reinert K."/>
            <person name="Remington K.A."/>
            <person name="Clark A.G."/>
            <person name="Waterman M.S."/>
            <person name="Eichler E.E."/>
            <person name="Adams M.D."/>
            <person name="Hunkapiller M.W."/>
            <person name="Myers E.W."/>
            <person name="Venter J.C."/>
        </authorList>
    </citation>
    <scope>NUCLEOTIDE SEQUENCE [LARGE SCALE GENOMIC DNA]</scope>
</reference>
<reference key="5">
    <citation type="journal article" date="2004" name="Genome Res.">
        <title>The status, quality, and expansion of the NIH full-length cDNA project: the Mammalian Gene Collection (MGC).</title>
        <authorList>
            <consortium name="The MGC Project Team"/>
        </authorList>
    </citation>
    <scope>NUCLEOTIDE SEQUENCE [LARGE SCALE MRNA] (ISOFORM 1)</scope>
    <source>
        <tissue>Kidney</tissue>
        <tissue>Uterus</tissue>
    </source>
</reference>
<reference key="6">
    <citation type="journal article" date="2011" name="BMC Syst. Biol.">
        <title>Initial characterization of the human central proteome.</title>
        <authorList>
            <person name="Burkard T.R."/>
            <person name="Planyavsky M."/>
            <person name="Kaupe I."/>
            <person name="Breitwieser F.P."/>
            <person name="Buerckstuemmer T."/>
            <person name="Bennett K.L."/>
            <person name="Superti-Furga G."/>
            <person name="Colinge J."/>
        </authorList>
    </citation>
    <scope>IDENTIFICATION BY MASS SPECTROMETRY [LARGE SCALE ANALYSIS]</scope>
</reference>
<reference key="7">
    <citation type="journal article" date="2014" name="J. Proteomics">
        <title>An enzyme assisted RP-RPLC approach for in-depth analysis of human liver phosphoproteome.</title>
        <authorList>
            <person name="Bian Y."/>
            <person name="Song C."/>
            <person name="Cheng K."/>
            <person name="Dong M."/>
            <person name="Wang F."/>
            <person name="Huang J."/>
            <person name="Sun D."/>
            <person name="Wang L."/>
            <person name="Ye M."/>
            <person name="Zou H."/>
        </authorList>
    </citation>
    <scope>IDENTIFICATION BY MASS SPECTROMETRY [LARGE SCALE ANALYSIS]</scope>
    <source>
        <tissue>Liver</tissue>
    </source>
</reference>
<feature type="chain" id="PRO_0000263691" description="Protein LZIC">
    <location>
        <begin position="1"/>
        <end position="190"/>
    </location>
</feature>
<feature type="coiled-coil region" evidence="2">
    <location>
        <begin position="2"/>
        <end position="63"/>
    </location>
</feature>
<feature type="splice variant" id="VSP_056083" description="In isoform 2." evidence="4">
    <original>M</original>
    <variation>MNNFIFLKFMTLGTSRTGEIKM</variation>
    <location>
        <position position="1"/>
    </location>
</feature>
<feature type="sequence variant" id="VAR_053371" description="In dbSNP:rs2304778.">
    <original>G</original>
    <variation>D</variation>
    <location>
        <position position="104"/>
    </location>
</feature>
<name>LZIC_HUMAN</name>
<gene>
    <name type="primary">LZIC</name>
</gene>